<dbReference type="EMBL" id="BC126021">
    <property type="protein sequence ID" value="AAI26022.1"/>
    <property type="status" value="ALT_INIT"/>
    <property type="molecule type" value="mRNA"/>
</dbReference>
<dbReference type="EMBL" id="BC154956">
    <property type="protein sequence ID" value="AAI54957.1"/>
    <property type="status" value="ALT_INIT"/>
    <property type="molecule type" value="mRNA"/>
</dbReference>
<dbReference type="SMR" id="A8WH34"/>
<dbReference type="GlyCosmos" id="A8WH34">
    <property type="glycosylation" value="15 sites, No reported glycans"/>
</dbReference>
<dbReference type="AGR" id="Xenbase:XB-GENE-5921573"/>
<dbReference type="Xenbase" id="XB-GENE-5921573">
    <property type="gene designation" value="glmp.S"/>
</dbReference>
<dbReference type="Proteomes" id="UP000186698">
    <property type="component" value="Unplaced"/>
</dbReference>
<dbReference type="GO" id="GO:0005765">
    <property type="term" value="C:lysosomal membrane"/>
    <property type="evidence" value="ECO:0007669"/>
    <property type="project" value="UniProtKB-SubCell"/>
</dbReference>
<dbReference type="GO" id="GO:0005764">
    <property type="term" value="C:lysosome"/>
    <property type="evidence" value="ECO:0000250"/>
    <property type="project" value="UniProtKB"/>
</dbReference>
<dbReference type="GO" id="GO:0016020">
    <property type="term" value="C:membrane"/>
    <property type="evidence" value="ECO:0000250"/>
    <property type="project" value="UniProtKB"/>
</dbReference>
<dbReference type="GO" id="GO:0061462">
    <property type="term" value="P:protein localization to lysosome"/>
    <property type="evidence" value="ECO:0000250"/>
    <property type="project" value="UniProtKB"/>
</dbReference>
<dbReference type="GO" id="GO:0050821">
    <property type="term" value="P:protein stabilization"/>
    <property type="evidence" value="ECO:0000250"/>
    <property type="project" value="UniProtKB"/>
</dbReference>
<dbReference type="InterPro" id="IPR029382">
    <property type="entry name" value="NCU-G1"/>
</dbReference>
<dbReference type="PANTHER" id="PTHR31981">
    <property type="entry name" value="GLYCOSYLATED LYSOSOMAL MEMBRANE PROTEIN"/>
    <property type="match status" value="1"/>
</dbReference>
<dbReference type="PANTHER" id="PTHR31981:SF1">
    <property type="entry name" value="GLYCOSYLATED LYSOSOMAL MEMBRANE PROTEIN"/>
    <property type="match status" value="1"/>
</dbReference>
<dbReference type="Pfam" id="PF15065">
    <property type="entry name" value="NCU-G1"/>
    <property type="match status" value="1"/>
</dbReference>
<keyword id="KW-0325">Glycoprotein</keyword>
<keyword id="KW-0458">Lysosome</keyword>
<keyword id="KW-0472">Membrane</keyword>
<keyword id="KW-1185">Reference proteome</keyword>
<keyword id="KW-0732">Signal</keyword>
<keyword id="KW-0812">Transmembrane</keyword>
<keyword id="KW-1133">Transmembrane helix</keyword>
<protein>
    <recommendedName>
        <fullName evidence="1">Glycosylated lysosomal membrane protein B</fullName>
    </recommendedName>
    <alternativeName>
        <fullName evidence="1">Lysosomal protein NCU-G1-B</fullName>
    </alternativeName>
</protein>
<feature type="signal peptide" evidence="3">
    <location>
        <begin position="1"/>
        <end position="24"/>
    </location>
</feature>
<feature type="chain" id="PRO_0000381839" description="Glycosylated lysosomal membrane protein B" evidence="4">
    <location>
        <begin position="25"/>
        <end position="404"/>
    </location>
</feature>
<feature type="topological domain" description="Lumenal" evidence="3">
    <location>
        <begin position="25"/>
        <end position="364"/>
    </location>
</feature>
<feature type="transmembrane region" description="Helical" evidence="3">
    <location>
        <begin position="365"/>
        <end position="385"/>
    </location>
</feature>
<feature type="topological domain" description="Cytoplasmic" evidence="3">
    <location>
        <begin position="386"/>
        <end position="404"/>
    </location>
</feature>
<feature type="short sequence motif" description="Lysosomal targeting motif" evidence="2">
    <location>
        <begin position="400"/>
        <end position="404"/>
    </location>
</feature>
<feature type="glycosylation site" description="N-linked (GlcNAc...) asparagine" evidence="3">
    <location>
        <position position="85"/>
    </location>
</feature>
<feature type="glycosylation site" description="N-linked (GlcNAc...) asparagine" evidence="3">
    <location>
        <position position="124"/>
    </location>
</feature>
<feature type="glycosylation site" description="N-linked (GlcNAc...) asparagine" evidence="3">
    <location>
        <position position="128"/>
    </location>
</feature>
<feature type="glycosylation site" description="N-linked (GlcNAc...) asparagine" evidence="3">
    <location>
        <position position="142"/>
    </location>
</feature>
<feature type="glycosylation site" description="N-linked (GlcNAc...) asparagine" evidence="3">
    <location>
        <position position="152"/>
    </location>
</feature>
<feature type="glycosylation site" description="N-linked (GlcNAc...) asparagine" evidence="3">
    <location>
        <position position="156"/>
    </location>
</feature>
<feature type="glycosylation site" description="N-linked (GlcNAc...) asparagine" evidence="3">
    <location>
        <position position="163"/>
    </location>
</feature>
<feature type="glycosylation site" description="N-linked (GlcNAc...) asparagine" evidence="3">
    <location>
        <position position="168"/>
    </location>
</feature>
<feature type="glycosylation site" description="N-linked (GlcNAc...) asparagine" evidence="3">
    <location>
        <position position="178"/>
    </location>
</feature>
<feature type="glycosylation site" description="N-linked (GlcNAc...) asparagine" evidence="3">
    <location>
        <position position="189"/>
    </location>
</feature>
<feature type="glycosylation site" description="N-linked (GlcNAc...) asparagine" evidence="3">
    <location>
        <position position="205"/>
    </location>
</feature>
<feature type="glycosylation site" description="N-linked (GlcNAc...) asparagine" evidence="3">
    <location>
        <position position="221"/>
    </location>
</feature>
<feature type="glycosylation site" description="N-linked (GlcNAc...) asparagine" evidence="3">
    <location>
        <position position="266"/>
    </location>
</feature>
<feature type="glycosylation site" description="N-linked (GlcNAc...) asparagine" evidence="3">
    <location>
        <position position="303"/>
    </location>
</feature>
<feature type="glycosylation site" description="N-linked (GlcNAc...) asparagine" evidence="3">
    <location>
        <position position="330"/>
    </location>
</feature>
<feature type="sequence conflict" description="In Ref. 1; AAI26022." evidence="4" ref="1">
    <original>T</original>
    <variation>A</variation>
    <location>
        <position position="169"/>
    </location>
</feature>
<feature type="sequence conflict" description="In Ref. 1; AAI26022." evidence="4" ref="1">
    <original>R</original>
    <variation>S</variation>
    <location>
        <position position="184"/>
    </location>
</feature>
<evidence type="ECO:0000250" key="1">
    <source>
        <dbReference type="UniProtKB" id="Q8WWB7"/>
    </source>
</evidence>
<evidence type="ECO:0000250" key="2">
    <source>
        <dbReference type="UniProtKB" id="Q9JHJ3"/>
    </source>
</evidence>
<evidence type="ECO:0000255" key="3"/>
<evidence type="ECO:0000305" key="4"/>
<reference key="1">
    <citation type="submission" date="2007-11" db="EMBL/GenBank/DDBJ databases">
        <authorList>
            <consortium name="NIH - Xenopus Gene Collection (XGC) project"/>
        </authorList>
    </citation>
    <scope>NUCLEOTIDE SEQUENCE [LARGE SCALE MRNA]</scope>
    <source>
        <tissue>Intestine</tissue>
        <tissue>Ovary</tissue>
    </source>
</reference>
<name>GLMPB_XENLA</name>
<proteinExistence type="evidence at transcript level"/>
<comment type="function">
    <text evidence="2">Required to protect lysosomal transporter MFSD1 from lysosomal proteolysis and for MFSD1 lysosomal localization.</text>
</comment>
<comment type="subunit">
    <text evidence="2">Interacts (via lumenal domain) with lysosomal protein MFSD1; the interaction starts while both proteins are still in the endoplasmic reticulum and is required for stabilization of MFSD1 in lysosomes but has no direct effect on its targeting to lysosomes or transporter activity.</text>
</comment>
<comment type="subcellular location">
    <subcellularLocation>
        <location evidence="2">Lysosome membrane</location>
        <topology evidence="3">Single-pass type I membrane protein</topology>
        <orientation evidence="4">Lumenal side</orientation>
    </subcellularLocation>
</comment>
<comment type="similarity">
    <text evidence="4">Belongs to the GLMP family.</text>
</comment>
<comment type="sequence caution" evidence="4">
    <conflict type="erroneous initiation">
        <sequence resource="EMBL-CDS" id="AAI26022"/>
    </conflict>
</comment>
<comment type="sequence caution" evidence="4">
    <conflict type="erroneous initiation">
        <sequence resource="EMBL-CDS" id="AAI54957"/>
    </conflict>
</comment>
<gene>
    <name type="primary">glmp-b</name>
</gene>
<organism>
    <name type="scientific">Xenopus laevis</name>
    <name type="common">African clawed frog</name>
    <dbReference type="NCBI Taxonomy" id="8355"/>
    <lineage>
        <taxon>Eukaryota</taxon>
        <taxon>Metazoa</taxon>
        <taxon>Chordata</taxon>
        <taxon>Craniata</taxon>
        <taxon>Vertebrata</taxon>
        <taxon>Euteleostomi</taxon>
        <taxon>Amphibia</taxon>
        <taxon>Batrachia</taxon>
        <taxon>Anura</taxon>
        <taxon>Pipoidea</taxon>
        <taxon>Pipidae</taxon>
        <taxon>Xenopodinae</taxon>
        <taxon>Xenopus</taxon>
        <taxon>Xenopus</taxon>
    </lineage>
</organism>
<accession>A8WH34</accession>
<accession>A0JMV6</accession>
<sequence length="404" mass="44427">MSCTRGWRLILLGLLCVGLLGTRGQDESRKVSVQYNPGSSDTSVNVVHVRAVGDGNTIHYVWSTLGTPTVLLIYTHSETSQLQVNWTKLLSPAPQGALRVEPEESVSYATALLFTRIFEYQDVNNTANFSGTDEKYFYPPYNLSEFLWENANATVNATSLSANLTGSNTTDPSGSFHNGSVSFRISAYNTSGRDSSPPRLRHTANCTKLEFLVSGVRPRGNNSRFALEMVTIEKEGRRKMKSVLSIDDEYTPTIFEMMQLVAVAPNSSHARGFLQWKSVAYGSPSGSRADLLPCQLYPLQPLNATFTATSIAHAYFGDDLADAYNLEAFNISFGIADGDFYDKHEFLSWSALIGYGDPPRDSFSILVICIMAVALGTPLLLLIIGTVLVTAVRHKVYPNYQPIN</sequence>